<evidence type="ECO:0000255" key="1">
    <source>
        <dbReference type="HAMAP-Rule" id="MF_01092"/>
    </source>
</evidence>
<organism>
    <name type="scientific">Shewanella baltica (strain OS185)</name>
    <dbReference type="NCBI Taxonomy" id="402882"/>
    <lineage>
        <taxon>Bacteria</taxon>
        <taxon>Pseudomonadati</taxon>
        <taxon>Pseudomonadota</taxon>
        <taxon>Gammaproteobacteria</taxon>
        <taxon>Alteromonadales</taxon>
        <taxon>Shewanellaceae</taxon>
        <taxon>Shewanella</taxon>
    </lineage>
</organism>
<accession>A6WTC8</accession>
<sequence>MTELVYEQPLNEKIRSYLRLEYLDKQLQSNLNHDHQHRCFYPLFSLCELSERCDYRNEVLKDIERHLLQLSKWQELDHVDHQQIDLYINALTQAREPLQKPERFGSQLKQDRFISALRQRFGMPGACCNFDLPQLHYWLAKPWEEKQQDYRSWIAHFEPLLTPITLLLQLTRSTAHYDNAVAHAGFYQGDSAQALALVRVKVDASHGCYPTISGHKNRFAIHFVQFEQQRHSDRSIDFLLATCA</sequence>
<dbReference type="EMBL" id="CP000753">
    <property type="protein sequence ID" value="ABS10067.1"/>
    <property type="molecule type" value="Genomic_DNA"/>
</dbReference>
<dbReference type="RefSeq" id="WP_012090388.1">
    <property type="nucleotide sequence ID" value="NC_009665.1"/>
</dbReference>
<dbReference type="SMR" id="A6WTC8"/>
<dbReference type="KEGG" id="sbm:Shew185_3946"/>
<dbReference type="HOGENOM" id="CLU_076303_0_0_6"/>
<dbReference type="GO" id="GO:0032153">
    <property type="term" value="C:cell division site"/>
    <property type="evidence" value="ECO:0007669"/>
    <property type="project" value="TreeGrafter"/>
</dbReference>
<dbReference type="GO" id="GO:0005737">
    <property type="term" value="C:cytoplasm"/>
    <property type="evidence" value="ECO:0007669"/>
    <property type="project" value="UniProtKB-SubCell"/>
</dbReference>
<dbReference type="GO" id="GO:0000917">
    <property type="term" value="P:division septum assembly"/>
    <property type="evidence" value="ECO:0007669"/>
    <property type="project" value="UniProtKB-KW"/>
</dbReference>
<dbReference type="GO" id="GO:0043093">
    <property type="term" value="P:FtsZ-dependent cytokinesis"/>
    <property type="evidence" value="ECO:0007669"/>
    <property type="project" value="UniProtKB-UniRule"/>
</dbReference>
<dbReference type="Gene3D" id="1.10.3900.10">
    <property type="entry name" value="YacF-like"/>
    <property type="match status" value="1"/>
</dbReference>
<dbReference type="Gene3D" id="2.60.440.10">
    <property type="entry name" value="YacF-like domains"/>
    <property type="match status" value="1"/>
</dbReference>
<dbReference type="HAMAP" id="MF_01092">
    <property type="entry name" value="ZapD"/>
    <property type="match status" value="1"/>
</dbReference>
<dbReference type="InterPro" id="IPR009777">
    <property type="entry name" value="ZapD"/>
</dbReference>
<dbReference type="InterPro" id="IPR027462">
    <property type="entry name" value="ZapD_C"/>
</dbReference>
<dbReference type="InterPro" id="IPR036268">
    <property type="entry name" value="ZapD_sf"/>
</dbReference>
<dbReference type="NCBIfam" id="NF003654">
    <property type="entry name" value="PRK05287.1-2"/>
    <property type="match status" value="1"/>
</dbReference>
<dbReference type="NCBIfam" id="NF003655">
    <property type="entry name" value="PRK05287.1-3"/>
    <property type="match status" value="1"/>
</dbReference>
<dbReference type="PANTHER" id="PTHR39455">
    <property type="entry name" value="CELL DIVISION PROTEIN ZAPD"/>
    <property type="match status" value="1"/>
</dbReference>
<dbReference type="PANTHER" id="PTHR39455:SF1">
    <property type="entry name" value="CELL DIVISION PROTEIN ZAPD"/>
    <property type="match status" value="1"/>
</dbReference>
<dbReference type="Pfam" id="PF07072">
    <property type="entry name" value="ZapD"/>
    <property type="match status" value="1"/>
</dbReference>
<dbReference type="SUPFAM" id="SSF160950">
    <property type="entry name" value="YacF-like"/>
    <property type="match status" value="1"/>
</dbReference>
<reference key="1">
    <citation type="submission" date="2007-07" db="EMBL/GenBank/DDBJ databases">
        <title>Complete sequence of chromosome of Shewanella baltica OS185.</title>
        <authorList>
            <consortium name="US DOE Joint Genome Institute"/>
            <person name="Copeland A."/>
            <person name="Lucas S."/>
            <person name="Lapidus A."/>
            <person name="Barry K."/>
            <person name="Glavina del Rio T."/>
            <person name="Dalin E."/>
            <person name="Tice H."/>
            <person name="Pitluck S."/>
            <person name="Sims D."/>
            <person name="Brettin T."/>
            <person name="Bruce D."/>
            <person name="Detter J.C."/>
            <person name="Han C."/>
            <person name="Schmutz J."/>
            <person name="Larimer F."/>
            <person name="Land M."/>
            <person name="Hauser L."/>
            <person name="Kyrpides N."/>
            <person name="Mikhailova N."/>
            <person name="Brettar I."/>
            <person name="Rodrigues J."/>
            <person name="Konstantinidis K."/>
            <person name="Tiedje J."/>
            <person name="Richardson P."/>
        </authorList>
    </citation>
    <scope>NUCLEOTIDE SEQUENCE [LARGE SCALE GENOMIC DNA]</scope>
    <source>
        <strain>OS185</strain>
    </source>
</reference>
<keyword id="KW-0131">Cell cycle</keyword>
<keyword id="KW-0132">Cell division</keyword>
<keyword id="KW-0963">Cytoplasm</keyword>
<keyword id="KW-0717">Septation</keyword>
<name>ZAPD_SHEB8</name>
<comment type="function">
    <text evidence="1">Cell division factor that enhances FtsZ-ring assembly. Directly interacts with FtsZ and promotes bundling of FtsZ protofilaments, with a reduction in FtsZ GTPase activity.</text>
</comment>
<comment type="subunit">
    <text evidence="1">Interacts with FtsZ.</text>
</comment>
<comment type="subcellular location">
    <subcellularLocation>
        <location evidence="1">Cytoplasm</location>
    </subcellularLocation>
    <text evidence="1">Localizes to mid-cell in an FtsZ-dependent manner.</text>
</comment>
<comment type="similarity">
    <text evidence="1">Belongs to the ZapD family.</text>
</comment>
<protein>
    <recommendedName>
        <fullName evidence="1">Cell division protein ZapD</fullName>
    </recommendedName>
    <alternativeName>
        <fullName evidence="1">Z ring-associated protein D</fullName>
    </alternativeName>
</protein>
<feature type="chain" id="PRO_1000064921" description="Cell division protein ZapD">
    <location>
        <begin position="1"/>
        <end position="244"/>
    </location>
</feature>
<gene>
    <name evidence="1" type="primary">zapD</name>
    <name type="ordered locus">Shew185_3946</name>
</gene>
<proteinExistence type="inferred from homology"/>